<name>ATPL_STRPS</name>
<sequence length="66" mass="7260">MNLTFLGLCIACMGVSVGEGLLMNGLFKSVARQPDMLSEFRSLMFLGVAFIEGTFFVTLVFSFIIK</sequence>
<reference key="1">
    <citation type="journal article" date="2009" name="BMC Genomics">
        <title>Genome evolution driven by host adaptations results in a more virulent and antimicrobial-resistant Streptococcus pneumoniae serotype 14.</title>
        <authorList>
            <person name="Ding F."/>
            <person name="Tang P."/>
            <person name="Hsu M.-H."/>
            <person name="Cui P."/>
            <person name="Hu S."/>
            <person name="Yu J."/>
            <person name="Chiu C.-H."/>
        </authorList>
    </citation>
    <scope>NUCLEOTIDE SEQUENCE [LARGE SCALE GENOMIC DNA]</scope>
    <source>
        <strain>CGSP14</strain>
    </source>
</reference>
<accession>B2IQX6</accession>
<comment type="function">
    <text evidence="1">F(1)F(0) ATP synthase produces ATP from ADP in the presence of a proton or sodium gradient. F-type ATPases consist of two structural domains, F(1) containing the extramembraneous catalytic core and F(0) containing the membrane proton channel, linked together by a central stalk and a peripheral stalk. During catalysis, ATP synthesis in the catalytic domain of F(1) is coupled via a rotary mechanism of the central stalk subunits to proton translocation.</text>
</comment>
<comment type="function">
    <text evidence="1">Key component of the F(0) channel; it plays a direct role in translocation across the membrane. A homomeric c-ring of between 10-14 subunits forms the central stalk rotor element with the F(1) delta and epsilon subunits.</text>
</comment>
<comment type="subunit">
    <text evidence="1">F-type ATPases have 2 components, F(1) - the catalytic core - and F(0) - the membrane proton channel. F(1) has five subunits: alpha(3), beta(3), gamma(1), delta(1), epsilon(1). F(0) has three main subunits: a(1), b(2) and c(10-14). The alpha and beta chains form an alternating ring which encloses part of the gamma chain. F(1) is attached to F(0) by a central stalk formed by the gamma and epsilon chains, while a peripheral stalk is formed by the delta and b chains.</text>
</comment>
<comment type="subcellular location">
    <subcellularLocation>
        <location evidence="1">Cell membrane</location>
        <topology evidence="1">Multi-pass membrane protein</topology>
    </subcellularLocation>
</comment>
<comment type="similarity">
    <text evidence="1">Belongs to the ATPase C chain family.</text>
</comment>
<organism>
    <name type="scientific">Streptococcus pneumoniae (strain CGSP14)</name>
    <dbReference type="NCBI Taxonomy" id="516950"/>
    <lineage>
        <taxon>Bacteria</taxon>
        <taxon>Bacillati</taxon>
        <taxon>Bacillota</taxon>
        <taxon>Bacilli</taxon>
        <taxon>Lactobacillales</taxon>
        <taxon>Streptococcaceae</taxon>
        <taxon>Streptococcus</taxon>
    </lineage>
</organism>
<gene>
    <name evidence="1" type="primary">atpE</name>
    <name type="ordered locus">SPCG_1498</name>
</gene>
<evidence type="ECO:0000255" key="1">
    <source>
        <dbReference type="HAMAP-Rule" id="MF_01396"/>
    </source>
</evidence>
<feature type="chain" id="PRO_1000215169" description="ATP synthase subunit c">
    <location>
        <begin position="1"/>
        <end position="66"/>
    </location>
</feature>
<feature type="transmembrane region" description="Helical" evidence="1">
    <location>
        <begin position="3"/>
        <end position="23"/>
    </location>
</feature>
<feature type="transmembrane region" description="Helical" evidence="1">
    <location>
        <begin position="45"/>
        <end position="65"/>
    </location>
</feature>
<feature type="site" description="Reversibly protonated during proton transport" evidence="1">
    <location>
        <position position="52"/>
    </location>
</feature>
<proteinExistence type="inferred from homology"/>
<dbReference type="EMBL" id="CP001033">
    <property type="protein sequence ID" value="ACB90750.1"/>
    <property type="molecule type" value="Genomic_DNA"/>
</dbReference>
<dbReference type="RefSeq" id="WP_001054562.1">
    <property type="nucleotide sequence ID" value="NC_010582.1"/>
</dbReference>
<dbReference type="SMR" id="B2IQX6"/>
<dbReference type="KEGG" id="spw:SPCG_1498"/>
<dbReference type="HOGENOM" id="CLU_148047_5_2_9"/>
<dbReference type="GO" id="GO:0005886">
    <property type="term" value="C:plasma membrane"/>
    <property type="evidence" value="ECO:0007669"/>
    <property type="project" value="UniProtKB-SubCell"/>
</dbReference>
<dbReference type="GO" id="GO:0045259">
    <property type="term" value="C:proton-transporting ATP synthase complex"/>
    <property type="evidence" value="ECO:0007669"/>
    <property type="project" value="UniProtKB-KW"/>
</dbReference>
<dbReference type="GO" id="GO:0033177">
    <property type="term" value="C:proton-transporting two-sector ATPase complex, proton-transporting domain"/>
    <property type="evidence" value="ECO:0007669"/>
    <property type="project" value="InterPro"/>
</dbReference>
<dbReference type="GO" id="GO:0008289">
    <property type="term" value="F:lipid binding"/>
    <property type="evidence" value="ECO:0007669"/>
    <property type="project" value="UniProtKB-KW"/>
</dbReference>
<dbReference type="GO" id="GO:0046933">
    <property type="term" value="F:proton-transporting ATP synthase activity, rotational mechanism"/>
    <property type="evidence" value="ECO:0007669"/>
    <property type="project" value="UniProtKB-UniRule"/>
</dbReference>
<dbReference type="CDD" id="cd18121">
    <property type="entry name" value="ATP-synt_Fo_c"/>
    <property type="match status" value="1"/>
</dbReference>
<dbReference type="FunFam" id="1.20.20.10:FF:000017">
    <property type="entry name" value="ATP synthase subunit c"/>
    <property type="match status" value="1"/>
</dbReference>
<dbReference type="Gene3D" id="1.20.20.10">
    <property type="entry name" value="F1F0 ATP synthase subunit C"/>
    <property type="match status" value="1"/>
</dbReference>
<dbReference type="HAMAP" id="MF_01396">
    <property type="entry name" value="ATP_synth_c_bact"/>
    <property type="match status" value="1"/>
</dbReference>
<dbReference type="InterPro" id="IPR000454">
    <property type="entry name" value="ATP_synth_F0_csu"/>
</dbReference>
<dbReference type="InterPro" id="IPR020537">
    <property type="entry name" value="ATP_synth_F0_csu_DDCD_BS"/>
</dbReference>
<dbReference type="InterPro" id="IPR038662">
    <property type="entry name" value="ATP_synth_F0_csu_sf"/>
</dbReference>
<dbReference type="InterPro" id="IPR002379">
    <property type="entry name" value="ATPase_proteolipid_c-like_dom"/>
</dbReference>
<dbReference type="InterPro" id="IPR035921">
    <property type="entry name" value="F/V-ATP_Csub_sf"/>
</dbReference>
<dbReference type="NCBIfam" id="NF009997">
    <property type="entry name" value="PRK13467.1"/>
    <property type="match status" value="1"/>
</dbReference>
<dbReference type="Pfam" id="PF00137">
    <property type="entry name" value="ATP-synt_C"/>
    <property type="match status" value="1"/>
</dbReference>
<dbReference type="PRINTS" id="PR00124">
    <property type="entry name" value="ATPASEC"/>
</dbReference>
<dbReference type="SUPFAM" id="SSF81333">
    <property type="entry name" value="F1F0 ATP synthase subunit C"/>
    <property type="match status" value="1"/>
</dbReference>
<dbReference type="PROSITE" id="PS00605">
    <property type="entry name" value="ATPASE_C"/>
    <property type="match status" value="1"/>
</dbReference>
<keyword id="KW-0066">ATP synthesis</keyword>
<keyword id="KW-1003">Cell membrane</keyword>
<keyword id="KW-0138">CF(0)</keyword>
<keyword id="KW-0375">Hydrogen ion transport</keyword>
<keyword id="KW-0406">Ion transport</keyword>
<keyword id="KW-0446">Lipid-binding</keyword>
<keyword id="KW-0472">Membrane</keyword>
<keyword id="KW-0812">Transmembrane</keyword>
<keyword id="KW-1133">Transmembrane helix</keyword>
<keyword id="KW-0813">Transport</keyword>
<protein>
    <recommendedName>
        <fullName evidence="1">ATP synthase subunit c</fullName>
    </recommendedName>
    <alternativeName>
        <fullName evidence="1">ATP synthase F(0) sector subunit c</fullName>
    </alternativeName>
    <alternativeName>
        <fullName evidence="1">F-type ATPase subunit c</fullName>
        <shortName evidence="1">F-ATPase subunit c</shortName>
    </alternativeName>
    <alternativeName>
        <fullName evidence="1">Lipid-binding protein</fullName>
    </alternativeName>
</protein>